<organism>
    <name type="scientific">Roseiflexus castenholzii (strain DSM 13941 / HLO8)</name>
    <dbReference type="NCBI Taxonomy" id="383372"/>
    <lineage>
        <taxon>Bacteria</taxon>
        <taxon>Bacillati</taxon>
        <taxon>Chloroflexota</taxon>
        <taxon>Chloroflexia</taxon>
        <taxon>Chloroflexales</taxon>
        <taxon>Roseiflexineae</taxon>
        <taxon>Roseiflexaceae</taxon>
        <taxon>Roseiflexus</taxon>
    </lineage>
</organism>
<reference key="1">
    <citation type="submission" date="2007-08" db="EMBL/GenBank/DDBJ databases">
        <title>Complete sequence of Roseiflexus castenholzii DSM 13941.</title>
        <authorList>
            <consortium name="US DOE Joint Genome Institute"/>
            <person name="Copeland A."/>
            <person name="Lucas S."/>
            <person name="Lapidus A."/>
            <person name="Barry K."/>
            <person name="Glavina del Rio T."/>
            <person name="Dalin E."/>
            <person name="Tice H."/>
            <person name="Pitluck S."/>
            <person name="Thompson L.S."/>
            <person name="Brettin T."/>
            <person name="Bruce D."/>
            <person name="Detter J.C."/>
            <person name="Han C."/>
            <person name="Tapia R."/>
            <person name="Schmutz J."/>
            <person name="Larimer F."/>
            <person name="Land M."/>
            <person name="Hauser L."/>
            <person name="Kyrpides N."/>
            <person name="Mikhailova N."/>
            <person name="Bryant D.A."/>
            <person name="Hanada S."/>
            <person name="Tsukatani Y."/>
            <person name="Richardson P."/>
        </authorList>
    </citation>
    <scope>NUCLEOTIDE SEQUENCE [LARGE SCALE GENOMIC DNA]</scope>
    <source>
        <strain>DSM 13941 / HLO8</strain>
    </source>
</reference>
<evidence type="ECO:0000255" key="1">
    <source>
        <dbReference type="HAMAP-Rule" id="MF_00281"/>
    </source>
</evidence>
<sequence>MSLIDQLNQLEQEALAALDHAADLTALAEWKSAYLGKQGALSRLSRGLGALPAEERPAAGARFNAARATLEQALERAEAQLKRAARQHAFEADQVDVTLPGRAPAVGRLHPTTQMLRTIYTILGEMGFQVWESPEVETDEFNFQLLNMPPDHPARDMWDTFYVETASGEPTLLLRTHTSPGQIYAMRANAPNPVRAILPGKCYRYEQVTARHEMQFFQVEGIAIGERISFADLKGTLVAFAERLYGKGVKTRFRPSYFPFTEPSVEFDIECFLCGGAGCRVCKHSGWLEILGAGMIHPTVLRNGGYDPEKVSGFAFGMGPERMAMLRYGIDDIRWFFSGDERFLQQF</sequence>
<comment type="catalytic activity">
    <reaction evidence="1">
        <text>tRNA(Phe) + L-phenylalanine + ATP = L-phenylalanyl-tRNA(Phe) + AMP + diphosphate + H(+)</text>
        <dbReference type="Rhea" id="RHEA:19413"/>
        <dbReference type="Rhea" id="RHEA-COMP:9668"/>
        <dbReference type="Rhea" id="RHEA-COMP:9699"/>
        <dbReference type="ChEBI" id="CHEBI:15378"/>
        <dbReference type="ChEBI" id="CHEBI:30616"/>
        <dbReference type="ChEBI" id="CHEBI:33019"/>
        <dbReference type="ChEBI" id="CHEBI:58095"/>
        <dbReference type="ChEBI" id="CHEBI:78442"/>
        <dbReference type="ChEBI" id="CHEBI:78531"/>
        <dbReference type="ChEBI" id="CHEBI:456215"/>
        <dbReference type="EC" id="6.1.1.20"/>
    </reaction>
</comment>
<comment type="cofactor">
    <cofactor evidence="1">
        <name>Mg(2+)</name>
        <dbReference type="ChEBI" id="CHEBI:18420"/>
    </cofactor>
    <text evidence="1">Binds 2 magnesium ions per tetramer.</text>
</comment>
<comment type="subunit">
    <text evidence="1">Tetramer of two alpha and two beta subunits.</text>
</comment>
<comment type="subcellular location">
    <subcellularLocation>
        <location evidence="1">Cytoplasm</location>
    </subcellularLocation>
</comment>
<comment type="similarity">
    <text evidence="1">Belongs to the class-II aminoacyl-tRNA synthetase family. Phe-tRNA synthetase alpha subunit type 1 subfamily.</text>
</comment>
<name>SYFA_ROSCS</name>
<feature type="chain" id="PRO_1000078848" description="Phenylalanine--tRNA ligase alpha subunit">
    <location>
        <begin position="1"/>
        <end position="347"/>
    </location>
</feature>
<feature type="binding site" evidence="1">
    <location>
        <position position="262"/>
    </location>
    <ligand>
        <name>Mg(2+)</name>
        <dbReference type="ChEBI" id="CHEBI:18420"/>
        <note>shared with beta subunit</note>
    </ligand>
</feature>
<dbReference type="EC" id="6.1.1.20" evidence="1"/>
<dbReference type="EMBL" id="CP000804">
    <property type="protein sequence ID" value="ABU57533.1"/>
    <property type="molecule type" value="Genomic_DNA"/>
</dbReference>
<dbReference type="RefSeq" id="WP_012119961.1">
    <property type="nucleotide sequence ID" value="NC_009767.1"/>
</dbReference>
<dbReference type="SMR" id="A7NJ67"/>
<dbReference type="STRING" id="383372.Rcas_1438"/>
<dbReference type="KEGG" id="rca:Rcas_1438"/>
<dbReference type="eggNOG" id="COG0016">
    <property type="taxonomic scope" value="Bacteria"/>
</dbReference>
<dbReference type="HOGENOM" id="CLU_025086_0_1_0"/>
<dbReference type="OrthoDB" id="9800719at2"/>
<dbReference type="Proteomes" id="UP000000263">
    <property type="component" value="Chromosome"/>
</dbReference>
<dbReference type="GO" id="GO:0005737">
    <property type="term" value="C:cytoplasm"/>
    <property type="evidence" value="ECO:0007669"/>
    <property type="project" value="UniProtKB-SubCell"/>
</dbReference>
<dbReference type="GO" id="GO:0005524">
    <property type="term" value="F:ATP binding"/>
    <property type="evidence" value="ECO:0007669"/>
    <property type="project" value="UniProtKB-UniRule"/>
</dbReference>
<dbReference type="GO" id="GO:0000287">
    <property type="term" value="F:magnesium ion binding"/>
    <property type="evidence" value="ECO:0007669"/>
    <property type="project" value="UniProtKB-UniRule"/>
</dbReference>
<dbReference type="GO" id="GO:0004826">
    <property type="term" value="F:phenylalanine-tRNA ligase activity"/>
    <property type="evidence" value="ECO:0007669"/>
    <property type="project" value="UniProtKB-UniRule"/>
</dbReference>
<dbReference type="GO" id="GO:0000049">
    <property type="term" value="F:tRNA binding"/>
    <property type="evidence" value="ECO:0007669"/>
    <property type="project" value="InterPro"/>
</dbReference>
<dbReference type="GO" id="GO:0006432">
    <property type="term" value="P:phenylalanyl-tRNA aminoacylation"/>
    <property type="evidence" value="ECO:0007669"/>
    <property type="project" value="UniProtKB-UniRule"/>
</dbReference>
<dbReference type="CDD" id="cd00496">
    <property type="entry name" value="PheRS_alpha_core"/>
    <property type="match status" value="1"/>
</dbReference>
<dbReference type="Gene3D" id="3.30.930.10">
    <property type="entry name" value="Bira Bifunctional Protein, Domain 2"/>
    <property type="match status" value="1"/>
</dbReference>
<dbReference type="HAMAP" id="MF_00281">
    <property type="entry name" value="Phe_tRNA_synth_alpha1"/>
    <property type="match status" value="1"/>
</dbReference>
<dbReference type="InterPro" id="IPR006195">
    <property type="entry name" value="aa-tRNA-synth_II"/>
</dbReference>
<dbReference type="InterPro" id="IPR045864">
    <property type="entry name" value="aa-tRNA-synth_II/BPL/LPL"/>
</dbReference>
<dbReference type="InterPro" id="IPR004529">
    <property type="entry name" value="Phe-tRNA-synth_IIc_asu"/>
</dbReference>
<dbReference type="InterPro" id="IPR004188">
    <property type="entry name" value="Phe-tRNA_ligase_II_N"/>
</dbReference>
<dbReference type="InterPro" id="IPR022911">
    <property type="entry name" value="Phe_tRNA_ligase_alpha1_bac"/>
</dbReference>
<dbReference type="InterPro" id="IPR002319">
    <property type="entry name" value="Phenylalanyl-tRNA_Synthase"/>
</dbReference>
<dbReference type="InterPro" id="IPR010978">
    <property type="entry name" value="tRNA-bd_arm"/>
</dbReference>
<dbReference type="NCBIfam" id="TIGR00468">
    <property type="entry name" value="pheS"/>
    <property type="match status" value="1"/>
</dbReference>
<dbReference type="PANTHER" id="PTHR11538:SF41">
    <property type="entry name" value="PHENYLALANINE--TRNA LIGASE, MITOCHONDRIAL"/>
    <property type="match status" value="1"/>
</dbReference>
<dbReference type="PANTHER" id="PTHR11538">
    <property type="entry name" value="PHENYLALANYL-TRNA SYNTHETASE"/>
    <property type="match status" value="1"/>
</dbReference>
<dbReference type="Pfam" id="PF02912">
    <property type="entry name" value="Phe_tRNA-synt_N"/>
    <property type="match status" value="1"/>
</dbReference>
<dbReference type="Pfam" id="PF01409">
    <property type="entry name" value="tRNA-synt_2d"/>
    <property type="match status" value="1"/>
</dbReference>
<dbReference type="SUPFAM" id="SSF55681">
    <property type="entry name" value="Class II aaRS and biotin synthetases"/>
    <property type="match status" value="1"/>
</dbReference>
<dbReference type="SUPFAM" id="SSF46589">
    <property type="entry name" value="tRNA-binding arm"/>
    <property type="match status" value="1"/>
</dbReference>
<dbReference type="PROSITE" id="PS50862">
    <property type="entry name" value="AA_TRNA_LIGASE_II"/>
    <property type="match status" value="1"/>
</dbReference>
<protein>
    <recommendedName>
        <fullName evidence="1">Phenylalanine--tRNA ligase alpha subunit</fullName>
        <ecNumber evidence="1">6.1.1.20</ecNumber>
    </recommendedName>
    <alternativeName>
        <fullName evidence="1">Phenylalanyl-tRNA synthetase alpha subunit</fullName>
        <shortName evidence="1">PheRS</shortName>
    </alternativeName>
</protein>
<accession>A7NJ67</accession>
<gene>
    <name evidence="1" type="primary">pheS</name>
    <name type="ordered locus">Rcas_1438</name>
</gene>
<keyword id="KW-0030">Aminoacyl-tRNA synthetase</keyword>
<keyword id="KW-0067">ATP-binding</keyword>
<keyword id="KW-0963">Cytoplasm</keyword>
<keyword id="KW-0436">Ligase</keyword>
<keyword id="KW-0460">Magnesium</keyword>
<keyword id="KW-0479">Metal-binding</keyword>
<keyword id="KW-0547">Nucleotide-binding</keyword>
<keyword id="KW-0648">Protein biosynthesis</keyword>
<keyword id="KW-1185">Reference proteome</keyword>
<proteinExistence type="inferred from homology"/>